<comment type="function">
    <text evidence="1">Exhibits a very high intrinsic GTPase hydrolysis rate. Involved in the addition of a carboxymethylaminomethyl (cmnm) group at the wobble position (U34) of certain tRNAs, forming tRNA-cmnm(5)s(2)U34.</text>
</comment>
<comment type="cofactor">
    <cofactor evidence="1">
        <name>K(+)</name>
        <dbReference type="ChEBI" id="CHEBI:29103"/>
    </cofactor>
    <text evidence="1">Binds 1 potassium ion per subunit.</text>
</comment>
<comment type="subunit">
    <text evidence="1">Homodimer. Heterotetramer of two MnmE and two MnmG subunits.</text>
</comment>
<comment type="subcellular location">
    <subcellularLocation>
        <location evidence="1">Cytoplasm</location>
    </subcellularLocation>
</comment>
<comment type="similarity">
    <text evidence="1">Belongs to the TRAFAC class TrmE-Era-EngA-EngB-Septin-like GTPase superfamily. TrmE GTPase family.</text>
</comment>
<reference key="1">
    <citation type="journal article" date="2005" name="PLoS Biol.">
        <title>The Wolbachia genome of Brugia malayi: endosymbiont evolution within a human pathogenic nematode.</title>
        <authorList>
            <person name="Foster J."/>
            <person name="Ganatra M."/>
            <person name="Kamal I."/>
            <person name="Ware J."/>
            <person name="Makarova K."/>
            <person name="Ivanova N."/>
            <person name="Bhattacharyya A."/>
            <person name="Kapatral V."/>
            <person name="Kumar S."/>
            <person name="Posfai J."/>
            <person name="Vincze T."/>
            <person name="Ingram J."/>
            <person name="Moran L."/>
            <person name="Lapidus A."/>
            <person name="Omelchenko M."/>
            <person name="Kyrpides N."/>
            <person name="Ghedin E."/>
            <person name="Wang S."/>
            <person name="Goltsman E."/>
            <person name="Joukov V."/>
            <person name="Ostrovskaya O."/>
            <person name="Tsukerman K."/>
            <person name="Mazur M."/>
            <person name="Comb D."/>
            <person name="Koonin E."/>
            <person name="Slatko B."/>
        </authorList>
    </citation>
    <scope>NUCLEOTIDE SEQUENCE [LARGE SCALE GENOMIC DNA]</scope>
    <source>
        <strain>TRS</strain>
    </source>
</reference>
<gene>
    <name evidence="1" type="primary">mnmE</name>
    <name evidence="1" type="synonym">trmE</name>
    <name type="ordered locus">Wbm0032</name>
</gene>
<dbReference type="EC" id="3.6.-.-" evidence="1"/>
<dbReference type="EMBL" id="AE017321">
    <property type="protein sequence ID" value="AAW70624.1"/>
    <property type="molecule type" value="Genomic_DNA"/>
</dbReference>
<dbReference type="RefSeq" id="WP_011256234.1">
    <property type="nucleotide sequence ID" value="NC_006833.1"/>
</dbReference>
<dbReference type="SMR" id="Q5GTQ0"/>
<dbReference type="STRING" id="292805.Wbm0032"/>
<dbReference type="KEGG" id="wbm:Wbm0032"/>
<dbReference type="eggNOG" id="COG0486">
    <property type="taxonomic scope" value="Bacteria"/>
</dbReference>
<dbReference type="HOGENOM" id="CLU_019624_3_1_5"/>
<dbReference type="Proteomes" id="UP000000534">
    <property type="component" value="Chromosome"/>
</dbReference>
<dbReference type="GO" id="GO:0005737">
    <property type="term" value="C:cytoplasm"/>
    <property type="evidence" value="ECO:0007669"/>
    <property type="project" value="UniProtKB-SubCell"/>
</dbReference>
<dbReference type="GO" id="GO:0005525">
    <property type="term" value="F:GTP binding"/>
    <property type="evidence" value="ECO:0007669"/>
    <property type="project" value="UniProtKB-UniRule"/>
</dbReference>
<dbReference type="GO" id="GO:0003924">
    <property type="term" value="F:GTPase activity"/>
    <property type="evidence" value="ECO:0007669"/>
    <property type="project" value="UniProtKB-UniRule"/>
</dbReference>
<dbReference type="GO" id="GO:0046872">
    <property type="term" value="F:metal ion binding"/>
    <property type="evidence" value="ECO:0007669"/>
    <property type="project" value="UniProtKB-KW"/>
</dbReference>
<dbReference type="GO" id="GO:0030488">
    <property type="term" value="P:tRNA methylation"/>
    <property type="evidence" value="ECO:0007669"/>
    <property type="project" value="TreeGrafter"/>
</dbReference>
<dbReference type="GO" id="GO:0002098">
    <property type="term" value="P:tRNA wobble uridine modification"/>
    <property type="evidence" value="ECO:0007669"/>
    <property type="project" value="TreeGrafter"/>
</dbReference>
<dbReference type="CDD" id="cd04164">
    <property type="entry name" value="trmE"/>
    <property type="match status" value="1"/>
</dbReference>
<dbReference type="CDD" id="cd14858">
    <property type="entry name" value="TrmE_N"/>
    <property type="match status" value="1"/>
</dbReference>
<dbReference type="FunFam" id="3.30.1360.120:FF:000007">
    <property type="entry name" value="tRNA modification GTPase GTPBP3, mitochondrial"/>
    <property type="match status" value="1"/>
</dbReference>
<dbReference type="Gene3D" id="3.40.50.300">
    <property type="entry name" value="P-loop containing nucleotide triphosphate hydrolases"/>
    <property type="match status" value="1"/>
</dbReference>
<dbReference type="Gene3D" id="3.30.1360.120">
    <property type="entry name" value="Probable tRNA modification gtpase trme, domain 1"/>
    <property type="match status" value="1"/>
</dbReference>
<dbReference type="Gene3D" id="1.20.120.430">
    <property type="entry name" value="tRNA modification GTPase MnmE domain 2"/>
    <property type="match status" value="1"/>
</dbReference>
<dbReference type="HAMAP" id="MF_00379">
    <property type="entry name" value="GTPase_MnmE"/>
    <property type="match status" value="1"/>
</dbReference>
<dbReference type="InterPro" id="IPR031168">
    <property type="entry name" value="G_TrmE"/>
</dbReference>
<dbReference type="InterPro" id="IPR006073">
    <property type="entry name" value="GTP-bd"/>
</dbReference>
<dbReference type="InterPro" id="IPR018948">
    <property type="entry name" value="GTP-bd_TrmE_N"/>
</dbReference>
<dbReference type="InterPro" id="IPR004520">
    <property type="entry name" value="GTPase_MnmE"/>
</dbReference>
<dbReference type="InterPro" id="IPR027368">
    <property type="entry name" value="MnmE_dom2"/>
</dbReference>
<dbReference type="InterPro" id="IPR025867">
    <property type="entry name" value="MnmE_helical"/>
</dbReference>
<dbReference type="InterPro" id="IPR027417">
    <property type="entry name" value="P-loop_NTPase"/>
</dbReference>
<dbReference type="InterPro" id="IPR005225">
    <property type="entry name" value="Small_GTP-bd"/>
</dbReference>
<dbReference type="InterPro" id="IPR027266">
    <property type="entry name" value="TrmE/GcvT_dom1"/>
</dbReference>
<dbReference type="NCBIfam" id="TIGR00450">
    <property type="entry name" value="mnmE_trmE_thdF"/>
    <property type="match status" value="1"/>
</dbReference>
<dbReference type="NCBIfam" id="NF003661">
    <property type="entry name" value="PRK05291.1-3"/>
    <property type="match status" value="1"/>
</dbReference>
<dbReference type="NCBIfam" id="TIGR00231">
    <property type="entry name" value="small_GTP"/>
    <property type="match status" value="1"/>
</dbReference>
<dbReference type="PANTHER" id="PTHR42714">
    <property type="entry name" value="TRNA MODIFICATION GTPASE GTPBP3"/>
    <property type="match status" value="1"/>
</dbReference>
<dbReference type="PANTHER" id="PTHR42714:SF2">
    <property type="entry name" value="TRNA MODIFICATION GTPASE GTPBP3, MITOCHONDRIAL"/>
    <property type="match status" value="1"/>
</dbReference>
<dbReference type="Pfam" id="PF01926">
    <property type="entry name" value="MMR_HSR1"/>
    <property type="match status" value="1"/>
</dbReference>
<dbReference type="Pfam" id="PF12631">
    <property type="entry name" value="MnmE_helical"/>
    <property type="match status" value="1"/>
</dbReference>
<dbReference type="Pfam" id="PF10396">
    <property type="entry name" value="TrmE_N"/>
    <property type="match status" value="1"/>
</dbReference>
<dbReference type="SUPFAM" id="SSF52540">
    <property type="entry name" value="P-loop containing nucleoside triphosphate hydrolases"/>
    <property type="match status" value="1"/>
</dbReference>
<dbReference type="SUPFAM" id="SSF116878">
    <property type="entry name" value="TrmE connector domain"/>
    <property type="match status" value="1"/>
</dbReference>
<dbReference type="PROSITE" id="PS51709">
    <property type="entry name" value="G_TRME"/>
    <property type="match status" value="1"/>
</dbReference>
<sequence>MMNTDETIFALSTVFGKSGVAVIRISGNHALKALNHFHVNKDMKPRFATLVDLYDSSDQLIDNGIAIYFPAPNSFTGEDVIELQVHGGKAVIKIVLEELSRIFVMAKPGEFLLRAFLNGKFDLTQIEGIADLIDAETKMQAKQAIKQMSGELEKLYSSWRQRLIAVQSKIEAYIDFPEDVATEKNELEKINDEVQTLVQSIQEHLNDNRRGERLREGLHIVITGEPNVGKSTLFNFLARRDIAIVSEYVGTTRDILEAHIDIGGYPIILSDTAGIRESSDPVESEGISRAKKRSCEADLRIELFPFEQRYNINCNVISSNTIYVLSKADDVINDHDIKISDIDFLPVSILKGIGTEKLVSVIKEKVEEKFVYDRDVPVITRQRHRNCMQKAIEHLRRFNMNNPIELVSEDLRLAASELGVVTGIINVEEVLDDIFNNFCVGK</sequence>
<accession>Q5GTQ0</accession>
<protein>
    <recommendedName>
        <fullName evidence="1">tRNA modification GTPase MnmE</fullName>
        <ecNumber evidence="1">3.6.-.-</ecNumber>
    </recommendedName>
</protein>
<evidence type="ECO:0000255" key="1">
    <source>
        <dbReference type="HAMAP-Rule" id="MF_00379"/>
    </source>
</evidence>
<proteinExistence type="inferred from homology"/>
<keyword id="KW-0963">Cytoplasm</keyword>
<keyword id="KW-0342">GTP-binding</keyword>
<keyword id="KW-0378">Hydrolase</keyword>
<keyword id="KW-0460">Magnesium</keyword>
<keyword id="KW-0479">Metal-binding</keyword>
<keyword id="KW-0547">Nucleotide-binding</keyword>
<keyword id="KW-0630">Potassium</keyword>
<keyword id="KW-1185">Reference proteome</keyword>
<keyword id="KW-0819">tRNA processing</keyword>
<organism>
    <name type="scientific">Wolbachia sp. subsp. Brugia malayi (strain TRS)</name>
    <dbReference type="NCBI Taxonomy" id="292805"/>
    <lineage>
        <taxon>Bacteria</taxon>
        <taxon>Pseudomonadati</taxon>
        <taxon>Pseudomonadota</taxon>
        <taxon>Alphaproteobacteria</taxon>
        <taxon>Rickettsiales</taxon>
        <taxon>Anaplasmataceae</taxon>
        <taxon>Wolbachieae</taxon>
        <taxon>Wolbachia</taxon>
    </lineage>
</organism>
<name>MNME_WOLTR</name>
<feature type="chain" id="PRO_0000345939" description="tRNA modification GTPase MnmE">
    <location>
        <begin position="1"/>
        <end position="442"/>
    </location>
</feature>
<feature type="domain" description="TrmE-type G">
    <location>
        <begin position="217"/>
        <end position="367"/>
    </location>
</feature>
<feature type="binding site" evidence="1">
    <location>
        <position position="24"/>
    </location>
    <ligand>
        <name>(6S)-5-formyl-5,6,7,8-tetrahydrofolate</name>
        <dbReference type="ChEBI" id="CHEBI:57457"/>
    </ligand>
</feature>
<feature type="binding site" evidence="1">
    <location>
        <position position="82"/>
    </location>
    <ligand>
        <name>(6S)-5-formyl-5,6,7,8-tetrahydrofolate</name>
        <dbReference type="ChEBI" id="CHEBI:57457"/>
    </ligand>
</feature>
<feature type="binding site" evidence="1">
    <location>
        <position position="120"/>
    </location>
    <ligand>
        <name>(6S)-5-formyl-5,6,7,8-tetrahydrofolate</name>
        <dbReference type="ChEBI" id="CHEBI:57457"/>
    </ligand>
</feature>
<feature type="binding site" evidence="1">
    <location>
        <begin position="227"/>
        <end position="232"/>
    </location>
    <ligand>
        <name>GTP</name>
        <dbReference type="ChEBI" id="CHEBI:37565"/>
    </ligand>
</feature>
<feature type="binding site" evidence="1">
    <location>
        <position position="231"/>
    </location>
    <ligand>
        <name>Mg(2+)</name>
        <dbReference type="ChEBI" id="CHEBI:18420"/>
    </ligand>
</feature>
<feature type="binding site" evidence="1">
    <location>
        <begin position="246"/>
        <end position="252"/>
    </location>
    <ligand>
        <name>GTP</name>
        <dbReference type="ChEBI" id="CHEBI:37565"/>
    </ligand>
</feature>
<feature type="binding site" evidence="1">
    <location>
        <position position="252"/>
    </location>
    <ligand>
        <name>Mg(2+)</name>
        <dbReference type="ChEBI" id="CHEBI:18420"/>
    </ligand>
</feature>
<feature type="binding site" evidence="1">
    <location>
        <begin position="271"/>
        <end position="274"/>
    </location>
    <ligand>
        <name>GTP</name>
        <dbReference type="ChEBI" id="CHEBI:37565"/>
    </ligand>
</feature>
<feature type="binding site" evidence="1">
    <location>
        <position position="442"/>
    </location>
    <ligand>
        <name>(6S)-5-formyl-5,6,7,8-tetrahydrofolate</name>
        <dbReference type="ChEBI" id="CHEBI:57457"/>
    </ligand>
</feature>